<evidence type="ECO:0000250" key="1"/>
<evidence type="ECO:0000255" key="2">
    <source>
        <dbReference type="PROSITE-ProRule" id="PRU00465"/>
    </source>
</evidence>
<evidence type="ECO:0000255" key="3">
    <source>
        <dbReference type="PROSITE-ProRule" id="PRU00711"/>
    </source>
</evidence>
<evidence type="ECO:0000269" key="4">
    <source>
    </source>
</evidence>
<evidence type="ECO:0000269" key="5">
    <source>
    </source>
</evidence>
<evidence type="ECO:0000305" key="6"/>
<keyword id="KW-0001">2Fe-2S</keyword>
<keyword id="KW-0003">3Fe-4S</keyword>
<keyword id="KW-0004">4Fe-4S</keyword>
<keyword id="KW-0249">Electron transport</keyword>
<keyword id="KW-0408">Iron</keyword>
<keyword id="KW-0411">Iron-sulfur</keyword>
<keyword id="KW-0472">Membrane</keyword>
<keyword id="KW-0479">Metal-binding</keyword>
<keyword id="KW-0496">Mitochondrion</keyword>
<keyword id="KW-0999">Mitochondrion inner membrane</keyword>
<keyword id="KW-0560">Oxidoreductase</keyword>
<keyword id="KW-1185">Reference proteome</keyword>
<keyword id="KW-0809">Transit peptide</keyword>
<keyword id="KW-0813">Transport</keyword>
<keyword id="KW-0816">Tricarboxylic acid cycle</keyword>
<organism>
    <name type="scientific">Saccharomyces cerevisiae (strain ATCC 204508 / S288c)</name>
    <name type="common">Baker's yeast</name>
    <dbReference type="NCBI Taxonomy" id="559292"/>
    <lineage>
        <taxon>Eukaryota</taxon>
        <taxon>Fungi</taxon>
        <taxon>Dikarya</taxon>
        <taxon>Ascomycota</taxon>
        <taxon>Saccharomycotina</taxon>
        <taxon>Saccharomycetes</taxon>
        <taxon>Saccharomycetales</taxon>
        <taxon>Saccharomycetaceae</taxon>
        <taxon>Saccharomyces</taxon>
    </lineage>
</organism>
<proteinExistence type="evidence at protein level"/>
<dbReference type="EC" id="1.3.5.1"/>
<dbReference type="EMBL" id="J05487">
    <property type="protein sequence ID" value="AAA35021.1"/>
    <property type="molecule type" value="Genomic_DNA"/>
</dbReference>
<dbReference type="EMBL" id="Z73146">
    <property type="protein sequence ID" value="CAA97492.1"/>
    <property type="molecule type" value="Genomic_DNA"/>
</dbReference>
<dbReference type="EMBL" id="AY558189">
    <property type="protein sequence ID" value="AAS56515.1"/>
    <property type="molecule type" value="Genomic_DNA"/>
</dbReference>
<dbReference type="EMBL" id="BK006945">
    <property type="protein sequence ID" value="DAA09281.1"/>
    <property type="molecule type" value="Genomic_DNA"/>
</dbReference>
<dbReference type="PIR" id="A35435">
    <property type="entry name" value="RDBYIS"/>
</dbReference>
<dbReference type="RefSeq" id="NP_013059.1">
    <property type="nucleotide sequence ID" value="NM_001181861.1"/>
</dbReference>
<dbReference type="SMR" id="P21801"/>
<dbReference type="BioGRID" id="31272">
    <property type="interactions" value="192"/>
</dbReference>
<dbReference type="ComplexPortal" id="CPX-565">
    <property type="entry name" value="Mitochondrial respiratory chain complex II"/>
</dbReference>
<dbReference type="DIP" id="DIP-5856N"/>
<dbReference type="FunCoup" id="P21801">
    <property type="interactions" value="898"/>
</dbReference>
<dbReference type="IntAct" id="P21801">
    <property type="interactions" value="15"/>
</dbReference>
<dbReference type="STRING" id="4932.YLL041C"/>
<dbReference type="PaxDb" id="4932-YLL041C"/>
<dbReference type="PeptideAtlas" id="P21801"/>
<dbReference type="EnsemblFungi" id="YLL041C_mRNA">
    <property type="protein sequence ID" value="YLL041C"/>
    <property type="gene ID" value="YLL041C"/>
</dbReference>
<dbReference type="GeneID" id="850685"/>
<dbReference type="KEGG" id="sce:YLL041C"/>
<dbReference type="AGR" id="SGD:S000003964"/>
<dbReference type="SGD" id="S000003964">
    <property type="gene designation" value="SDH2"/>
</dbReference>
<dbReference type="VEuPathDB" id="FungiDB:YLL041C"/>
<dbReference type="eggNOG" id="KOG3049">
    <property type="taxonomic scope" value="Eukaryota"/>
</dbReference>
<dbReference type="GeneTree" id="ENSGT00390000013558"/>
<dbReference type="HOGENOM" id="CLU_044838_0_2_1"/>
<dbReference type="InParanoid" id="P21801"/>
<dbReference type="OMA" id="DGQYFGP"/>
<dbReference type="OrthoDB" id="1696654at2759"/>
<dbReference type="BioCyc" id="MetaCyc:YLL041C-MONOMER"/>
<dbReference type="BioCyc" id="YEAST:YLL041C-MONOMER"/>
<dbReference type="Reactome" id="R-SCE-71403">
    <property type="pathway name" value="Citric acid cycle (TCA cycle)"/>
</dbReference>
<dbReference type="UniPathway" id="UPA00223">
    <property type="reaction ID" value="UER01006"/>
</dbReference>
<dbReference type="BioGRID-ORCS" id="850685">
    <property type="hits" value="4 hits in 10 CRISPR screens"/>
</dbReference>
<dbReference type="PRO" id="PR:P21801"/>
<dbReference type="Proteomes" id="UP000002311">
    <property type="component" value="Chromosome XII"/>
</dbReference>
<dbReference type="RNAct" id="P21801">
    <property type="molecule type" value="protein"/>
</dbReference>
<dbReference type="GO" id="GO:0005743">
    <property type="term" value="C:mitochondrial inner membrane"/>
    <property type="evidence" value="ECO:0000314"/>
    <property type="project" value="ComplexPortal"/>
</dbReference>
<dbReference type="GO" id="GO:0031966">
    <property type="term" value="C:mitochondrial membrane"/>
    <property type="evidence" value="ECO:0000314"/>
    <property type="project" value="SGD"/>
</dbReference>
<dbReference type="GO" id="GO:0005739">
    <property type="term" value="C:mitochondrion"/>
    <property type="evidence" value="ECO:0007005"/>
    <property type="project" value="SGD"/>
</dbReference>
<dbReference type="GO" id="GO:0045273">
    <property type="term" value="C:respiratory chain complex II (succinate dehydrogenase)"/>
    <property type="evidence" value="ECO:0000314"/>
    <property type="project" value="SGD"/>
</dbReference>
<dbReference type="GO" id="GO:0051537">
    <property type="term" value="F:2 iron, 2 sulfur cluster binding"/>
    <property type="evidence" value="ECO:0007669"/>
    <property type="project" value="UniProtKB-KW"/>
</dbReference>
<dbReference type="GO" id="GO:0051538">
    <property type="term" value="F:3 iron, 4 sulfur cluster binding"/>
    <property type="evidence" value="ECO:0007669"/>
    <property type="project" value="UniProtKB-KW"/>
</dbReference>
<dbReference type="GO" id="GO:0051539">
    <property type="term" value="F:4 iron, 4 sulfur cluster binding"/>
    <property type="evidence" value="ECO:0007669"/>
    <property type="project" value="UniProtKB-KW"/>
</dbReference>
<dbReference type="GO" id="GO:0009055">
    <property type="term" value="F:electron transfer activity"/>
    <property type="evidence" value="ECO:0007669"/>
    <property type="project" value="InterPro"/>
</dbReference>
<dbReference type="GO" id="GO:0046872">
    <property type="term" value="F:metal ion binding"/>
    <property type="evidence" value="ECO:0007669"/>
    <property type="project" value="UniProtKB-KW"/>
</dbReference>
<dbReference type="GO" id="GO:0008177">
    <property type="term" value="F:succinate dehydrogenase (quinone) activity"/>
    <property type="evidence" value="ECO:0000314"/>
    <property type="project" value="SGD"/>
</dbReference>
<dbReference type="GO" id="GO:0009060">
    <property type="term" value="P:aerobic respiration"/>
    <property type="evidence" value="ECO:0000318"/>
    <property type="project" value="GO_Central"/>
</dbReference>
<dbReference type="GO" id="GO:0045333">
    <property type="term" value="P:cellular respiration"/>
    <property type="evidence" value="ECO:0000315"/>
    <property type="project" value="SGD"/>
</dbReference>
<dbReference type="GO" id="GO:0006121">
    <property type="term" value="P:mitochondrial electron transport, succinate to ubiquinone"/>
    <property type="evidence" value="ECO:0000314"/>
    <property type="project" value="ComplexPortal"/>
</dbReference>
<dbReference type="GO" id="GO:0022904">
    <property type="term" value="P:respiratory electron transport chain"/>
    <property type="evidence" value="ECO:0000318"/>
    <property type="project" value="GO_Central"/>
</dbReference>
<dbReference type="GO" id="GO:0006099">
    <property type="term" value="P:tricarboxylic acid cycle"/>
    <property type="evidence" value="ECO:0000314"/>
    <property type="project" value="ComplexPortal"/>
</dbReference>
<dbReference type="CDD" id="cd00207">
    <property type="entry name" value="fer2"/>
    <property type="match status" value="1"/>
</dbReference>
<dbReference type="FunFam" id="3.10.20.30:FF:000007">
    <property type="entry name" value="Succinate dehydrogenase [ubiquinone] iron-sulfur subunit, mitochondrial"/>
    <property type="match status" value="1"/>
</dbReference>
<dbReference type="FunFam" id="1.10.1060.10:FF:000001">
    <property type="entry name" value="Succinate dehydrogenase iron-sulfur subunit SdhB"/>
    <property type="match status" value="1"/>
</dbReference>
<dbReference type="Gene3D" id="3.10.20.30">
    <property type="match status" value="1"/>
</dbReference>
<dbReference type="Gene3D" id="1.10.1060.10">
    <property type="entry name" value="Alpha-helical ferredoxin"/>
    <property type="match status" value="1"/>
</dbReference>
<dbReference type="InterPro" id="IPR036010">
    <property type="entry name" value="2Fe-2S_ferredoxin-like_sf"/>
</dbReference>
<dbReference type="InterPro" id="IPR001041">
    <property type="entry name" value="2Fe-2S_ferredoxin-type"/>
</dbReference>
<dbReference type="InterPro" id="IPR006058">
    <property type="entry name" value="2Fe2S_fd_BS"/>
</dbReference>
<dbReference type="InterPro" id="IPR017896">
    <property type="entry name" value="4Fe4S_Fe-S-bd"/>
</dbReference>
<dbReference type="InterPro" id="IPR017900">
    <property type="entry name" value="4Fe4S_Fe_S_CS"/>
</dbReference>
<dbReference type="InterPro" id="IPR012675">
    <property type="entry name" value="Beta-grasp_dom_sf"/>
</dbReference>
<dbReference type="InterPro" id="IPR009051">
    <property type="entry name" value="Helical_ferredxn"/>
</dbReference>
<dbReference type="InterPro" id="IPR050573">
    <property type="entry name" value="SDH/FRD_Iron-Sulfur"/>
</dbReference>
<dbReference type="InterPro" id="IPR004489">
    <property type="entry name" value="Succ_DH/fum_Rdtase_Fe-S"/>
</dbReference>
<dbReference type="InterPro" id="IPR025192">
    <property type="entry name" value="Succ_DH/fum_Rdtase_N"/>
</dbReference>
<dbReference type="NCBIfam" id="TIGR00384">
    <property type="entry name" value="dhsB"/>
    <property type="match status" value="1"/>
</dbReference>
<dbReference type="NCBIfam" id="NF004616">
    <property type="entry name" value="PRK05950.1"/>
    <property type="match status" value="1"/>
</dbReference>
<dbReference type="PANTHER" id="PTHR11921:SF29">
    <property type="entry name" value="SUCCINATE DEHYDROGENASE [UBIQUINONE] IRON-SULFUR SUBUNIT, MITOCHONDRIAL"/>
    <property type="match status" value="1"/>
</dbReference>
<dbReference type="PANTHER" id="PTHR11921">
    <property type="entry name" value="SUCCINATE DEHYDROGENASE IRON-SULFUR PROTEIN"/>
    <property type="match status" value="1"/>
</dbReference>
<dbReference type="Pfam" id="PF13085">
    <property type="entry name" value="Fer2_3"/>
    <property type="match status" value="1"/>
</dbReference>
<dbReference type="Pfam" id="PF13534">
    <property type="entry name" value="Fer4_17"/>
    <property type="match status" value="1"/>
</dbReference>
<dbReference type="SUPFAM" id="SSF54292">
    <property type="entry name" value="2Fe-2S ferredoxin-like"/>
    <property type="match status" value="1"/>
</dbReference>
<dbReference type="SUPFAM" id="SSF46548">
    <property type="entry name" value="alpha-helical ferredoxin"/>
    <property type="match status" value="1"/>
</dbReference>
<dbReference type="PROSITE" id="PS00197">
    <property type="entry name" value="2FE2S_FER_1"/>
    <property type="match status" value="1"/>
</dbReference>
<dbReference type="PROSITE" id="PS51085">
    <property type="entry name" value="2FE2S_FER_2"/>
    <property type="match status" value="1"/>
</dbReference>
<dbReference type="PROSITE" id="PS00198">
    <property type="entry name" value="4FE4S_FER_1"/>
    <property type="match status" value="1"/>
</dbReference>
<dbReference type="PROSITE" id="PS51379">
    <property type="entry name" value="4FE4S_FER_2"/>
    <property type="match status" value="1"/>
</dbReference>
<reference key="1">
    <citation type="journal article" date="1990" name="J. Biol. Chem.">
        <title>Cloning and characterization of the iron-sulfur subunit gene of succinate dehydrogenase from Saccharomyces cerevisiae.</title>
        <authorList>
            <person name="Lombardo A."/>
            <person name="Carine K."/>
            <person name="Scheffler I.E."/>
        </authorList>
    </citation>
    <scope>NUCLEOTIDE SEQUENCE [GENOMIC DNA]</scope>
</reference>
<reference key="2">
    <citation type="journal article" date="1997" name="Nature">
        <title>The nucleotide sequence of Saccharomyces cerevisiae chromosome XII.</title>
        <authorList>
            <person name="Johnston M."/>
            <person name="Hillier L.W."/>
            <person name="Riles L."/>
            <person name="Albermann K."/>
            <person name="Andre B."/>
            <person name="Ansorge W."/>
            <person name="Benes V."/>
            <person name="Brueckner M."/>
            <person name="Delius H."/>
            <person name="Dubois E."/>
            <person name="Duesterhoeft A."/>
            <person name="Entian K.-D."/>
            <person name="Floeth M."/>
            <person name="Goffeau A."/>
            <person name="Hebling U."/>
            <person name="Heumann K."/>
            <person name="Heuss-Neitzel D."/>
            <person name="Hilbert H."/>
            <person name="Hilger F."/>
            <person name="Kleine K."/>
            <person name="Koetter P."/>
            <person name="Louis E.J."/>
            <person name="Messenguy F."/>
            <person name="Mewes H.-W."/>
            <person name="Miosga T."/>
            <person name="Moestl D."/>
            <person name="Mueller-Auer S."/>
            <person name="Nentwich U."/>
            <person name="Obermaier B."/>
            <person name="Piravandi E."/>
            <person name="Pohl T.M."/>
            <person name="Portetelle D."/>
            <person name="Purnelle B."/>
            <person name="Rechmann S."/>
            <person name="Rieger M."/>
            <person name="Rinke M."/>
            <person name="Rose M."/>
            <person name="Scharfe M."/>
            <person name="Scherens B."/>
            <person name="Scholler P."/>
            <person name="Schwager C."/>
            <person name="Schwarz S."/>
            <person name="Underwood A.P."/>
            <person name="Urrestarazu L.A."/>
            <person name="Vandenbol M."/>
            <person name="Verhasselt P."/>
            <person name="Vierendeels F."/>
            <person name="Voet M."/>
            <person name="Volckaert G."/>
            <person name="Voss H."/>
            <person name="Wambutt R."/>
            <person name="Wedler E."/>
            <person name="Wedler H."/>
            <person name="Zimmermann F.K."/>
            <person name="Zollner A."/>
            <person name="Hani J."/>
            <person name="Hoheisel J.D."/>
        </authorList>
    </citation>
    <scope>NUCLEOTIDE SEQUENCE [LARGE SCALE GENOMIC DNA]</scope>
    <source>
        <strain>ATCC 204508 / S288c</strain>
    </source>
</reference>
<reference key="3">
    <citation type="journal article" date="2014" name="G3 (Bethesda)">
        <title>The reference genome sequence of Saccharomyces cerevisiae: Then and now.</title>
        <authorList>
            <person name="Engel S.R."/>
            <person name="Dietrich F.S."/>
            <person name="Fisk D.G."/>
            <person name="Binkley G."/>
            <person name="Balakrishnan R."/>
            <person name="Costanzo M.C."/>
            <person name="Dwight S.S."/>
            <person name="Hitz B.C."/>
            <person name="Karra K."/>
            <person name="Nash R.S."/>
            <person name="Weng S."/>
            <person name="Wong E.D."/>
            <person name="Lloyd P."/>
            <person name="Skrzypek M.S."/>
            <person name="Miyasato S.R."/>
            <person name="Simison M."/>
            <person name="Cherry J.M."/>
        </authorList>
    </citation>
    <scope>GENOME REANNOTATION</scope>
    <source>
        <strain>ATCC 204508 / S288c</strain>
    </source>
</reference>
<reference key="4">
    <citation type="journal article" date="2007" name="Genome Res.">
        <title>Approaching a complete repository of sequence-verified protein-encoding clones for Saccharomyces cerevisiae.</title>
        <authorList>
            <person name="Hu Y."/>
            <person name="Rolfs A."/>
            <person name="Bhullar B."/>
            <person name="Murthy T.V.S."/>
            <person name="Zhu C."/>
            <person name="Berger M.F."/>
            <person name="Camargo A.A."/>
            <person name="Kelley F."/>
            <person name="McCarron S."/>
            <person name="Jepson D."/>
            <person name="Richardson A."/>
            <person name="Raphael J."/>
            <person name="Moreira D."/>
            <person name="Taycher E."/>
            <person name="Zuo D."/>
            <person name="Mohr S."/>
            <person name="Kane M.F."/>
            <person name="Williamson J."/>
            <person name="Simpson A.J.G."/>
            <person name="Bulyk M.L."/>
            <person name="Harlow E."/>
            <person name="Marsischky G."/>
            <person name="Kolodner R.D."/>
            <person name="LaBaer J."/>
        </authorList>
    </citation>
    <scope>NUCLEOTIDE SEQUENCE [GENOMIC DNA]</scope>
    <source>
        <strain>ATCC 204508 / S288c</strain>
    </source>
</reference>
<reference key="5">
    <citation type="journal article" date="1989" name="Proc. Natl. Acad. Sci. U.S.A.">
        <title>Use of the DNA polymerase chain reaction for homology probing: isolation of partial cDNA or genomic clones encoding the iron-sulfur protein of succinate dehydrogenase from several species.</title>
        <authorList>
            <person name="Gould S.J."/>
            <person name="Subramani S."/>
            <person name="Scheffler I.E."/>
        </authorList>
    </citation>
    <scope>NUCLEOTIDE SEQUENCE [GENOMIC DNA] OF 101-242</scope>
</reference>
<reference key="6">
    <citation type="journal article" date="1993" name="Proc. Natl. Acad. Sci. U.S.A.">
        <authorList>
            <person name="Gould S.J."/>
            <person name="Subramani S."/>
            <person name="Scheffler I.E."/>
        </authorList>
    </citation>
    <scope>ERRATUM OF PUBMED:2494655</scope>
</reference>
<reference key="7">
    <citation type="journal article" date="1992" name="Biochemistry">
        <title>The C-terminus of the succinate dehydrogenase IP peptide of Saccharomyces cerevisiae is significant for assembly of complex II.</title>
        <authorList>
            <person name="Schmidt D.M."/>
            <person name="Saghbini M."/>
            <person name="Scheffler I.E."/>
        </authorList>
    </citation>
    <scope>MUTAGENESIS OF LYS-260; LYS-261 AND 260-LYS--ALA-266</scope>
</reference>
<reference key="8">
    <citation type="journal article" date="2002" name="Biochim. Biophys. Acta">
        <title>The Saccharomyces cerevisiae mitochondrial succinate:ubiquinone oxidoreductase.</title>
        <authorList>
            <person name="Lemire B.D."/>
            <person name="Oyedotun K.S."/>
        </authorList>
    </citation>
    <scope>REVIEW ON SUCCINATE DEHYDROGENASE</scope>
</reference>
<reference key="9">
    <citation type="journal article" date="2003" name="Nature">
        <title>Global analysis of protein expression in yeast.</title>
        <authorList>
            <person name="Ghaemmaghami S."/>
            <person name="Huh W.-K."/>
            <person name="Bower K."/>
            <person name="Howson R.W."/>
            <person name="Belle A."/>
            <person name="Dephoure N."/>
            <person name="O'Shea E.K."/>
            <person name="Weissman J.S."/>
        </authorList>
    </citation>
    <scope>LEVEL OF PROTEIN EXPRESSION [LARGE SCALE ANALYSIS]</scope>
</reference>
<reference key="10">
    <citation type="journal article" date="2004" name="J. Biol. Chem.">
        <title>The quaternary structure of the Saccharomyces cerevisiae succinate dehydrogenase. Homology modeling, cofactor docking, and molecular dynamics simulation studies.</title>
        <authorList>
            <person name="Oyedotun K.S."/>
            <person name="Lemire B.D."/>
        </authorList>
    </citation>
    <scope>3D-STRUCTURE MODELING OF 21-266</scope>
</reference>
<sequence length="266" mass="30231">MLNVLLRRKAFCLVTKKGMATATTAAATHTPRLKTFKVYRWNPDEPSAKPHLQSYQVDLNDCGPMVLDALLKIKDEQDSTLTFRRSCREGICGSCAMNIGGRNTLACICKIDQNESKQLKIYPLPHMFIVKDLVPDLTNFYQQYKSIQPYLQRSSFPKDGTEVLQSIEDRKKLDGLYECILCACCSTSCPSYWWNQEQYLGPAVLMQAYRWLIDSRDQATKTRKAMLNNSMSLYRCHTIMNCTRTCPKGLNPGLAIAEIKKSLAFA</sequence>
<protein>
    <recommendedName>
        <fullName>Succinate dehydrogenase [ubiquinone] iron-sulfur subunit, mitochondrial</fullName>
        <ecNumber>1.3.5.1</ecNumber>
    </recommendedName>
    <alternativeName>
        <fullName>Iron-sulfur subunit of complex II</fullName>
        <shortName>Ip</shortName>
    </alternativeName>
</protein>
<comment type="function">
    <text>Subunit of succinate dehydrogenase (SDH) that is involved in complex II of the mitochondrial electron transport chain and is responsible for transferring electrons from succinate to ubiquinone (coenzyme Q). SDH1 and SDH2 form the catalytic dimer. Electrons flow from succinate to the FAD bound to SDH1, and sequentially through the iron-sulfur clusters bound to SDH2 and enter the membrane dimer formed by SDH3 and SDH4.</text>
</comment>
<comment type="catalytic activity">
    <reaction>
        <text>a quinone + succinate = fumarate + a quinol</text>
        <dbReference type="Rhea" id="RHEA:40523"/>
        <dbReference type="ChEBI" id="CHEBI:24646"/>
        <dbReference type="ChEBI" id="CHEBI:29806"/>
        <dbReference type="ChEBI" id="CHEBI:30031"/>
        <dbReference type="ChEBI" id="CHEBI:132124"/>
        <dbReference type="EC" id="1.3.5.1"/>
    </reaction>
</comment>
<comment type="cofactor">
    <cofactor evidence="1">
        <name>[2Fe-2S] cluster</name>
        <dbReference type="ChEBI" id="CHEBI:190135"/>
    </cofactor>
    <text evidence="1">Binds 1 [2Fe-2S] cluster.</text>
</comment>
<comment type="cofactor">
    <cofactor evidence="1">
        <name>[3Fe-4S] cluster</name>
        <dbReference type="ChEBI" id="CHEBI:21137"/>
    </cofactor>
    <text evidence="1">Binds 1 [3Fe-4S] cluster.</text>
</comment>
<comment type="cofactor">
    <cofactor evidence="1">
        <name>[4Fe-4S] cluster</name>
        <dbReference type="ChEBI" id="CHEBI:49883"/>
    </cofactor>
    <text evidence="1">Binds 1 [4Fe-4S] cluster.</text>
</comment>
<comment type="pathway">
    <text>Carbohydrate metabolism; tricarboxylic acid cycle; fumarate from succinate (eukaryal route): step 1/1.</text>
</comment>
<comment type="subunit">
    <text evidence="1">Component of complex II composed of four subunits: a flavoprotein (FP), an iron-sulfur protein (IP), and a cytochrome b composed of a large and a small subunit.</text>
</comment>
<comment type="interaction">
    <interactant intactId="EBI-5856">
        <id>P21801</id>
    </interactant>
    <interactant intactId="EBI-5851">
        <id>Q00711</id>
        <label>SDH1</label>
    </interactant>
    <organismsDiffer>false</organismsDiffer>
    <experiments>2</experiments>
</comment>
<comment type="subcellular location">
    <subcellularLocation>
        <location>Mitochondrion inner membrane</location>
        <topology>Peripheral membrane protein</topology>
        <orientation>Matrix side</orientation>
    </subcellularLocation>
</comment>
<comment type="miscellaneous">
    <text evidence="5">Present with 9540 molecules/cell in log phase SD medium.</text>
</comment>
<comment type="similarity">
    <text evidence="6">Belongs to the succinate dehydrogenase/fumarate reductase iron-sulfur protein family.</text>
</comment>
<accession>P21801</accession>
<accession>D6VXW5</accession>
<feature type="transit peptide" description="Mitochondrion">
    <location>
        <begin position="1"/>
        <end position="20" status="uncertain"/>
    </location>
</feature>
<feature type="chain" id="PRO_0000010353" description="Succinate dehydrogenase [ubiquinone] iron-sulfur subunit, mitochondrial">
    <location>
        <begin position="21" status="uncertain"/>
        <end position="266"/>
    </location>
</feature>
<feature type="domain" description="2Fe-2S ferredoxin-type" evidence="2">
    <location>
        <begin position="36"/>
        <end position="127"/>
    </location>
</feature>
<feature type="domain" description="4Fe-4S ferredoxin-type" evidence="3">
    <location>
        <begin position="169"/>
        <end position="199"/>
    </location>
</feature>
<feature type="binding site" evidence="1">
    <location>
        <position position="87"/>
    </location>
    <ligand>
        <name>[2Fe-2S] cluster</name>
        <dbReference type="ChEBI" id="CHEBI:190135"/>
    </ligand>
</feature>
<feature type="binding site" evidence="1">
    <location>
        <position position="92"/>
    </location>
    <ligand>
        <name>[2Fe-2S] cluster</name>
        <dbReference type="ChEBI" id="CHEBI:190135"/>
    </ligand>
</feature>
<feature type="binding site" evidence="1">
    <location>
        <position position="95"/>
    </location>
    <ligand>
        <name>[2Fe-2S] cluster</name>
        <dbReference type="ChEBI" id="CHEBI:190135"/>
    </ligand>
</feature>
<feature type="binding site" evidence="1">
    <location>
        <position position="107"/>
    </location>
    <ligand>
        <name>[2Fe-2S] cluster</name>
        <dbReference type="ChEBI" id="CHEBI:190135"/>
    </ligand>
</feature>
<feature type="binding site" evidence="1">
    <location>
        <position position="179"/>
    </location>
    <ligand>
        <name>[4Fe-4S] cluster</name>
        <dbReference type="ChEBI" id="CHEBI:49883"/>
    </ligand>
</feature>
<feature type="binding site" evidence="1">
    <location>
        <position position="182"/>
    </location>
    <ligand>
        <name>[4Fe-4S] cluster</name>
        <dbReference type="ChEBI" id="CHEBI:49883"/>
    </ligand>
</feature>
<feature type="binding site" evidence="1">
    <location>
        <position position="185"/>
    </location>
    <ligand>
        <name>[4Fe-4S] cluster</name>
        <dbReference type="ChEBI" id="CHEBI:49883"/>
    </ligand>
</feature>
<feature type="binding site" evidence="1">
    <location>
        <position position="189"/>
    </location>
    <ligand>
        <name>[3Fe-4S] cluster</name>
        <dbReference type="ChEBI" id="CHEBI:21137"/>
    </ligand>
</feature>
<feature type="binding site" evidence="1">
    <location>
        <position position="194"/>
    </location>
    <ligand>
        <name>a ubiquinone</name>
        <dbReference type="ChEBI" id="CHEBI:16389"/>
        <note>ligand shared with DHSD</note>
    </ligand>
</feature>
<feature type="binding site" evidence="1">
    <location>
        <position position="236"/>
    </location>
    <ligand>
        <name>[3Fe-4S] cluster</name>
        <dbReference type="ChEBI" id="CHEBI:21137"/>
    </ligand>
</feature>
<feature type="binding site" evidence="1">
    <location>
        <position position="242"/>
    </location>
    <ligand>
        <name>[3Fe-4S] cluster</name>
        <dbReference type="ChEBI" id="CHEBI:21137"/>
    </ligand>
</feature>
<feature type="binding site" evidence="1">
    <location>
        <position position="246"/>
    </location>
    <ligand>
        <name>[4Fe-4S] cluster</name>
        <dbReference type="ChEBI" id="CHEBI:49883"/>
    </ligand>
</feature>
<feature type="mutagenesis site" description="Abolishes SDH activity and complex assembly." evidence="4">
    <location>
        <begin position="260"/>
        <end position="266"/>
    </location>
</feature>
<feature type="mutagenesis site" description="Abolishes SDH activity. No effect on complex assembly and stability; when associated with T-261." evidence="4">
    <original>K</original>
    <variation>T</variation>
    <location>
        <position position="260"/>
    </location>
</feature>
<feature type="mutagenesis site" description="Abolishes SDH activity. No effect on complex assembly and stability; when associated with T-260." evidence="4">
    <original>K</original>
    <variation>T</variation>
    <location>
        <position position="261"/>
    </location>
</feature>
<name>SDHB_YEAST</name>
<gene>
    <name type="primary">SDH2</name>
    <name type="synonym">SDH</name>
    <name type="synonym">SDHB</name>
    <name type="ordered locus">YLL041C</name>
</gene>